<comment type="function">
    <text evidence="4">Catalyzes the release of inorganic phosphate from 2',3'-cyclic nucleotides through consecutive 2',3'-phosphodiesterase and 3'- (or 2') nucleotidase activities. Also possesses a 5'-nucleotidase activity. Does not catalyze the release of inorganic phosphate from 3',5'-cyclic nucleotides. Probably plays a role in the cellular reprocessing of nucleotides present in the medium, under conditions of phosphate shortage.</text>
</comment>
<comment type="catalytic activity">
    <reaction evidence="4">
        <text>a nucleoside 2',3'-cyclic phosphate + H2O = a nucleoside 3'-phosphate + H(+)</text>
        <dbReference type="Rhea" id="RHEA:19621"/>
        <dbReference type="ChEBI" id="CHEBI:15377"/>
        <dbReference type="ChEBI" id="CHEBI:15378"/>
        <dbReference type="ChEBI" id="CHEBI:66949"/>
        <dbReference type="ChEBI" id="CHEBI:66954"/>
        <dbReference type="EC" id="3.1.4.16"/>
    </reaction>
</comment>
<comment type="catalytic activity">
    <reaction evidence="4">
        <text>a ribonucleoside 3'-phosphate + H2O = a ribonucleoside + phosphate</text>
        <dbReference type="Rhea" id="RHEA:10144"/>
        <dbReference type="ChEBI" id="CHEBI:13197"/>
        <dbReference type="ChEBI" id="CHEBI:15377"/>
        <dbReference type="ChEBI" id="CHEBI:18254"/>
        <dbReference type="ChEBI" id="CHEBI:43474"/>
        <dbReference type="EC" id="3.1.3.6"/>
    </reaction>
</comment>
<comment type="catalytic activity">
    <reaction evidence="4">
        <text>a ribonucleoside 5'-phosphate + H2O = a ribonucleoside + phosphate</text>
        <dbReference type="Rhea" id="RHEA:12484"/>
        <dbReference type="ChEBI" id="CHEBI:15377"/>
        <dbReference type="ChEBI" id="CHEBI:18254"/>
        <dbReference type="ChEBI" id="CHEBI:43474"/>
        <dbReference type="ChEBI" id="CHEBI:58043"/>
        <dbReference type="EC" id="3.1.3.5"/>
    </reaction>
</comment>
<comment type="cofactor">
    <cofactor evidence="1">
        <name>a divalent metal cation</name>
        <dbReference type="ChEBI" id="CHEBI:60240"/>
    </cofactor>
</comment>
<comment type="biophysicochemical properties">
    <kinetics>
        <text evidence="4">The 2',3'-cyclic phosphodiesterase activity is higher than that of the 5'-nucleotidase with the four major nucleotides used as substrates.</text>
    </kinetics>
</comment>
<comment type="subcellular location">
    <subcellularLocation>
        <location evidence="6 7 9">Secreted</location>
        <location evidence="6 7 9">Cell wall</location>
        <topology evidence="9">Peptidoglycan-anchor</topology>
    </subcellularLocation>
    <text evidence="6 7">Anchored to the cell wall by sortase SrtD.</text>
</comment>
<comment type="induction">
    <text evidence="5">Expression is induced in response to phosphate starvation in a PhoR-dependent manner.</text>
</comment>
<comment type="domain">
    <text evidence="4">The N-terminal region (amino acids 35-623) is able to catalyze the release of phosphate from 2',3'-cyclic nucleotides, but not from 5'-nucleotides.</text>
</comment>
<comment type="similarity">
    <text evidence="8">Belongs to the 5'-nucleotidase family.</text>
</comment>
<gene>
    <name type="primary">yfkN</name>
    <name type="ordered locus">BSU07840</name>
</gene>
<protein>
    <recommendedName>
        <fullName>Trifunctional nucleotide phosphoesterase protein YfkN</fullName>
    </recommendedName>
    <domain>
        <recommendedName>
            <fullName>2',3'-cyclic-nucleotide 2'-phosphodiesterase/3'-nucleotidase</fullName>
            <ecNumber>3.1.3.6</ecNumber>
            <ecNumber>3.1.4.16</ecNumber>
        </recommendedName>
    </domain>
    <domain>
        <recommendedName>
            <fullName>5'-nucleotidase</fullName>
            <ecNumber>3.1.3.5</ecNumber>
        </recommendedName>
    </domain>
</protein>
<evidence type="ECO:0000250" key="1"/>
<evidence type="ECO:0000255" key="2">
    <source>
        <dbReference type="PROSITE-ProRule" id="PRU00477"/>
    </source>
</evidence>
<evidence type="ECO:0000256" key="3">
    <source>
        <dbReference type="SAM" id="MobiDB-lite"/>
    </source>
</evidence>
<evidence type="ECO:0000269" key="4">
    <source>
    </source>
</evidence>
<evidence type="ECO:0000269" key="5">
    <source>
    </source>
</evidence>
<evidence type="ECO:0000269" key="6">
    <source>
    </source>
</evidence>
<evidence type="ECO:0000269" key="7">
    <source>
    </source>
</evidence>
<evidence type="ECO:0000305" key="8"/>
<evidence type="ECO:0000305" key="9">
    <source>
    </source>
</evidence>
<evidence type="ECO:0007829" key="10">
    <source>
        <dbReference type="PDB" id="3GVE"/>
    </source>
</evidence>
<proteinExistence type="evidence at protein level"/>
<organism>
    <name type="scientific">Bacillus subtilis (strain 168)</name>
    <dbReference type="NCBI Taxonomy" id="224308"/>
    <lineage>
        <taxon>Bacteria</taxon>
        <taxon>Bacillati</taxon>
        <taxon>Bacillota</taxon>
        <taxon>Bacilli</taxon>
        <taxon>Bacillales</taxon>
        <taxon>Bacillaceae</taxon>
        <taxon>Bacillus</taxon>
    </lineage>
</organism>
<accession>O34313</accession>
<accession>Q79EX6</accession>
<feature type="signal peptide" evidence="4">
    <location>
        <begin position="1"/>
        <end position="35"/>
    </location>
</feature>
<feature type="chain" id="PRO_0000390884" description="Trifunctional nucleotide phosphoesterase protein YfkN">
    <location>
        <begin position="36"/>
        <end position="1427"/>
    </location>
</feature>
<feature type="propeptide" id="PRO_0000390885" description="Removed by sortase" evidence="2">
    <location>
        <begin position="1428"/>
        <end position="1462"/>
    </location>
</feature>
<feature type="region of interest" description="2',3'-cyclic nucleotide 2'-phosphodiesterase/3'-nucleotidase">
    <location>
        <begin position="36"/>
        <end position="623"/>
    </location>
</feature>
<feature type="region of interest" description="5'-nucleotidase">
    <location>
        <begin position="624"/>
        <end position="1427"/>
    </location>
</feature>
<feature type="region of interest" description="Disordered" evidence="3">
    <location>
        <begin position="1350"/>
        <end position="1422"/>
    </location>
</feature>
<feature type="short sequence motif" description="LPXTG sorting signal" evidence="2">
    <location>
        <begin position="1424"/>
        <end position="1428"/>
    </location>
</feature>
<feature type="compositionally biased region" description="Gly residues" evidence="3">
    <location>
        <begin position="1405"/>
        <end position="1421"/>
    </location>
</feature>
<feature type="binding site">
    <location>
        <position position="52"/>
    </location>
    <ligand>
        <name>a divalent metal cation</name>
        <dbReference type="ChEBI" id="CHEBI:60240"/>
        <label>1</label>
    </ligand>
</feature>
<feature type="binding site">
    <location>
        <position position="54"/>
    </location>
    <ligand>
        <name>a divalent metal cation</name>
        <dbReference type="ChEBI" id="CHEBI:60240"/>
        <label>1</label>
    </ligand>
</feature>
<feature type="binding site">
    <location>
        <position position="97"/>
    </location>
    <ligand>
        <name>a divalent metal cation</name>
        <dbReference type="ChEBI" id="CHEBI:60240"/>
        <label>1</label>
    </ligand>
</feature>
<feature type="binding site">
    <location>
        <position position="97"/>
    </location>
    <ligand>
        <name>a divalent metal cation</name>
        <dbReference type="ChEBI" id="CHEBI:60240"/>
        <label>2</label>
    </ligand>
</feature>
<feature type="binding site">
    <location>
        <position position="141"/>
    </location>
    <ligand>
        <name>a divalent metal cation</name>
        <dbReference type="ChEBI" id="CHEBI:60240"/>
        <label>2</label>
    </ligand>
</feature>
<feature type="binding site">
    <location>
        <position position="249"/>
    </location>
    <ligand>
        <name>a divalent metal cation</name>
        <dbReference type="ChEBI" id="CHEBI:60240"/>
        <label>2</label>
    </ligand>
</feature>
<feature type="binding site">
    <location>
        <position position="282"/>
    </location>
    <ligand>
        <name>a divalent metal cation</name>
        <dbReference type="ChEBI" id="CHEBI:60240"/>
        <label>2</label>
    </ligand>
</feature>
<feature type="binding site">
    <location>
        <position position="284"/>
    </location>
    <ligand>
        <name>a divalent metal cation</name>
        <dbReference type="ChEBI" id="CHEBI:60240"/>
        <label>1</label>
    </ligand>
</feature>
<feature type="binding site" evidence="1">
    <location>
        <position position="458"/>
    </location>
    <ligand>
        <name>a ribonucleoside 3'-phosphate</name>
        <dbReference type="ChEBI" id="CHEBI:13197"/>
    </ligand>
</feature>
<feature type="binding site" evidence="1">
    <location>
        <begin position="561"/>
        <end position="567"/>
    </location>
    <ligand>
        <name>a ribonucleoside 3'-phosphate</name>
        <dbReference type="ChEBI" id="CHEBI:13197"/>
    </ligand>
</feature>
<feature type="binding site" evidence="1">
    <location>
        <position position="676"/>
    </location>
    <ligand>
        <name>a divalent metal cation</name>
        <dbReference type="ChEBI" id="CHEBI:60240"/>
        <label>3</label>
    </ligand>
</feature>
<feature type="binding site" evidence="1">
    <location>
        <position position="678"/>
    </location>
    <ligand>
        <name>a divalent metal cation</name>
        <dbReference type="ChEBI" id="CHEBI:60240"/>
        <label>3</label>
    </ligand>
</feature>
<feature type="binding site" evidence="1">
    <location>
        <position position="708"/>
    </location>
    <ligand>
        <name>a divalent metal cation</name>
        <dbReference type="ChEBI" id="CHEBI:60240"/>
        <label>3</label>
    </ligand>
</feature>
<feature type="binding site" evidence="1">
    <location>
        <position position="708"/>
    </location>
    <ligand>
        <name>a divalent metal cation</name>
        <dbReference type="ChEBI" id="CHEBI:60240"/>
        <label>4</label>
    </ligand>
</feature>
<feature type="binding site" evidence="1">
    <location>
        <position position="740"/>
    </location>
    <ligand>
        <name>a divalent metal cation</name>
        <dbReference type="ChEBI" id="CHEBI:60240"/>
        <label>4</label>
    </ligand>
</feature>
<feature type="binding site" evidence="1">
    <location>
        <position position="872"/>
    </location>
    <ligand>
        <name>a divalent metal cation</name>
        <dbReference type="ChEBI" id="CHEBI:60240"/>
        <label>4</label>
    </ligand>
</feature>
<feature type="binding site" evidence="1">
    <location>
        <position position="895"/>
    </location>
    <ligand>
        <name>a divalent metal cation</name>
        <dbReference type="ChEBI" id="CHEBI:60240"/>
        <label>4</label>
    </ligand>
</feature>
<feature type="binding site" evidence="1">
    <location>
        <position position="897"/>
    </location>
    <ligand>
        <name>a divalent metal cation</name>
        <dbReference type="ChEBI" id="CHEBI:60240"/>
        <label>3</label>
    </ligand>
</feature>
<feature type="binding site" evidence="1">
    <location>
        <position position="1047"/>
    </location>
    <ligand>
        <name>a ribonucleoside 5'-phosphate</name>
        <dbReference type="ChEBI" id="CHEBI:58043"/>
    </ligand>
</feature>
<feature type="binding site" evidence="1">
    <location>
        <begin position="1127"/>
        <end position="1133"/>
    </location>
    <ligand>
        <name>a ribonucleoside 5'-phosphate</name>
        <dbReference type="ChEBI" id="CHEBI:58043"/>
    </ligand>
</feature>
<feature type="modified residue" description="Pentaglycyl murein peptidoglycan amidated threonine" evidence="2">
    <location>
        <position position="1427"/>
    </location>
</feature>
<feature type="strand" evidence="10">
    <location>
        <begin position="42"/>
        <end position="50"/>
    </location>
</feature>
<feature type="strand" evidence="10">
    <location>
        <begin position="58"/>
        <end position="61"/>
    </location>
</feature>
<feature type="turn" evidence="10">
    <location>
        <begin position="62"/>
        <end position="65"/>
    </location>
</feature>
<feature type="helix" evidence="10">
    <location>
        <begin position="73"/>
        <end position="86"/>
    </location>
</feature>
<feature type="strand" evidence="10">
    <location>
        <begin position="88"/>
        <end position="94"/>
    </location>
</feature>
<feature type="helix" evidence="10">
    <location>
        <begin position="103"/>
        <end position="117"/>
    </location>
</feature>
<feature type="helix" evidence="10">
    <location>
        <begin position="124"/>
        <end position="131"/>
    </location>
</feature>
<feature type="strand" evidence="10">
    <location>
        <begin position="136"/>
        <end position="138"/>
    </location>
</feature>
<feature type="helix" evidence="10">
    <location>
        <begin position="141"/>
        <end position="144"/>
    </location>
</feature>
<feature type="helix" evidence="10">
    <location>
        <begin position="148"/>
        <end position="156"/>
    </location>
</feature>
<feature type="strand" evidence="10">
    <location>
        <begin position="165"/>
        <end position="168"/>
    </location>
</feature>
<feature type="strand" evidence="10">
    <location>
        <begin position="174"/>
        <end position="176"/>
    </location>
</feature>
<feature type="strand" evidence="10">
    <location>
        <begin position="179"/>
        <end position="187"/>
    </location>
</feature>
<feature type="strand" evidence="10">
    <location>
        <begin position="193"/>
        <end position="203"/>
    </location>
</feature>
<feature type="helix" evidence="10">
    <location>
        <begin position="208"/>
        <end position="211"/>
    </location>
</feature>
<feature type="helix" evidence="10">
    <location>
        <begin position="213"/>
        <end position="216"/>
    </location>
</feature>
<feature type="turn" evidence="10">
    <location>
        <begin position="217"/>
        <end position="219"/>
    </location>
</feature>
<feature type="helix" evidence="10">
    <location>
        <begin position="225"/>
        <end position="238"/>
    </location>
</feature>
<feature type="strand" evidence="10">
    <location>
        <begin position="242"/>
        <end position="248"/>
    </location>
</feature>
<feature type="helix" evidence="10">
    <location>
        <begin position="265"/>
        <end position="271"/>
    </location>
</feature>
<feature type="strand" evidence="10">
    <location>
        <begin position="277"/>
        <end position="280"/>
    </location>
</feature>
<feature type="strand" evidence="10">
    <location>
        <begin position="286"/>
        <end position="288"/>
    </location>
</feature>
<feature type="helix" evidence="10">
    <location>
        <begin position="290"/>
        <end position="292"/>
    </location>
</feature>
<feature type="turn" evidence="10">
    <location>
        <begin position="300"/>
        <end position="303"/>
    </location>
</feature>
<feature type="strand" evidence="10">
    <location>
        <begin position="308"/>
        <end position="313"/>
    </location>
</feature>
<feature type="strand" evidence="10">
    <location>
        <begin position="318"/>
        <end position="330"/>
    </location>
</feature>
<feature type="strand" evidence="10">
    <location>
        <begin position="333"/>
        <end position="346"/>
    </location>
</feature>
<feature type="turn" evidence="10">
    <location>
        <begin position="347"/>
        <end position="349"/>
    </location>
</feature>
<feature type="helix" evidence="10">
    <location>
        <begin position="355"/>
        <end position="373"/>
    </location>
</feature>
<name>NTPES_BACSU</name>
<sequence length="1462" mass="159706">MRIQKRRTHVENILRILLPPIMILSLILPTPPIHAEESAAPQVHLSILATTDIHANMMDYDYYSDKETADFGLARTAQLIQKHREQNPNTLLVDNGDLIQGNPLGEYAVKYQKDDIISGTKTHPIISVMNALKYDAGTLGNHEFNYGLDFLDGTIKGADFPIVNANVKTTSGENRYTPYVINEKTLIDENGNEQKVKVGYIGFVPPQIMTWDKKNLEGQVQVQDIVESANETIPKMKAEGADVIIALAHTGIEKQAQSSGAENAVFDLATKTKGIDAIISGHQHGLFPSAEYAGVAQFNVEKGTINGIPVVMPSSWGKYLGVIDLKLEKADGSWKVADSKGSIESIAGNVTSRNETVTNTIQQTHQNTLEYVRKPVGKTEADINSFFAQVKDDPSIQIVTDAQKWYAEKEMKDTEYKNLPILSAGAPFKAGGRNGANYYTNIPAGDLAIKNVGDLYLYDNTVQIVKLTGSEVKDWLEMSAGQFNQIDPAKGGDQALLNENFRSYNFDVIDGVTYQVDVTKPAKYNENGKVINADSSRIINLSYEGKPISPSQEFLVVTNNYRASGGGGFPHLTSDKIVHGSAVENRQVLMDYIIEQKTVNPKADNNWSIAPVSGTNLTFESSLLAKPFADKADDVAYVGKSANEGYGVYKLQFDDDSNPDPPKDGLWDLTVMHTNDTHAHLDDAARRMTKINEVRSETNHNILLDAGDVFSGDLYFTKWNGLADLKMMNMMGYDAMTFGNHEFDKGPTVLSDFLSGNSATVDPANRYHFEAPEFPIVSANVDVSNEPKLKSFVKKPQTFTAGEKKEAGIHPYILLDVDGEKVAVFGLTTEDTATTSSPGKSIVFNDAFETAQNTVKAIQEEEKVNKIIALTHIGHNRDLELAKKVKGIDLIIGGHTHTLVDKMEVVNNEEPTIVAQAKEYGQFLGRVDVAFDEKGVVQTDKSNLSVLPIDEHTEENPEAKQELDQFKNELEDVKNEKVGYTDVALDGQREHVRTKETNLGNFIADGMLAKAKEAAGARIAITNGGGIRAGIDKGDITLGEVLNVMPFGNTLYVADLTGKQIKEALEQGLSNVENGGGAFPQVAGIEYTFTLNNKPGHRVLEVKIESPNGDKVAINTDDTYRVATNNFVGAGGDGYSVFTEASHGEDLGYVDYEIFTEQLKKLGNKVSPKVEGRIKEVFLPTKQKDGSWTLDEDKFAIYAKNANTPFVYYGIHEGSQEKPINLKVKKDQVKLLKERESDPSLTMFNYWYSMKMPMANLKTADTAIGIKSTGELDVSLSDVYDFTVKQKGKEIKSFKEPVQLSLRMFDIEEAHNPAIYHVDRKKKAFTKTGHGSVDDDMVTGYTNHFSEYTILNSGSNNKPPAFPSDQPTGGDDGNHGGGSDKPGGKQPTDGNGGNDTPPGTQPTNGSGGNGSGGSGTDGPAGGLLPDTATSMYSILLAGFLISALGTAMYLHQRRKQNRANQA</sequence>
<reference key="1">
    <citation type="journal article" date="1996" name="Microbiology">
        <title>Cloning and sequencing of a 40.6 kb segment in the 73 degrees-76 degrees region of the Bacillus subtilis chromosome containing genes for trehalose metabolism and acetoin utilization.</title>
        <authorList>
            <person name="Yamamoto H."/>
            <person name="Uchiyama S."/>
            <person name="Sekiguchi J."/>
        </authorList>
    </citation>
    <scope>NUCLEOTIDE SEQUENCE [GENOMIC DNA]</scope>
    <source>
        <strain>168 / AC327</strain>
    </source>
</reference>
<reference key="2">
    <citation type="journal article" date="1997" name="Nature">
        <title>The complete genome sequence of the Gram-positive bacterium Bacillus subtilis.</title>
        <authorList>
            <person name="Kunst F."/>
            <person name="Ogasawara N."/>
            <person name="Moszer I."/>
            <person name="Albertini A.M."/>
            <person name="Alloni G."/>
            <person name="Azevedo V."/>
            <person name="Bertero M.G."/>
            <person name="Bessieres P."/>
            <person name="Bolotin A."/>
            <person name="Borchert S."/>
            <person name="Borriss R."/>
            <person name="Boursier L."/>
            <person name="Brans A."/>
            <person name="Braun M."/>
            <person name="Brignell S.C."/>
            <person name="Bron S."/>
            <person name="Brouillet S."/>
            <person name="Bruschi C.V."/>
            <person name="Caldwell B."/>
            <person name="Capuano V."/>
            <person name="Carter N.M."/>
            <person name="Choi S.-K."/>
            <person name="Codani J.-J."/>
            <person name="Connerton I.F."/>
            <person name="Cummings N.J."/>
            <person name="Daniel R.A."/>
            <person name="Denizot F."/>
            <person name="Devine K.M."/>
            <person name="Duesterhoeft A."/>
            <person name="Ehrlich S.D."/>
            <person name="Emmerson P.T."/>
            <person name="Entian K.-D."/>
            <person name="Errington J."/>
            <person name="Fabret C."/>
            <person name="Ferrari E."/>
            <person name="Foulger D."/>
            <person name="Fritz C."/>
            <person name="Fujita M."/>
            <person name="Fujita Y."/>
            <person name="Fuma S."/>
            <person name="Galizzi A."/>
            <person name="Galleron N."/>
            <person name="Ghim S.-Y."/>
            <person name="Glaser P."/>
            <person name="Goffeau A."/>
            <person name="Golightly E.J."/>
            <person name="Grandi G."/>
            <person name="Guiseppi G."/>
            <person name="Guy B.J."/>
            <person name="Haga K."/>
            <person name="Haiech J."/>
            <person name="Harwood C.R."/>
            <person name="Henaut A."/>
            <person name="Hilbert H."/>
            <person name="Holsappel S."/>
            <person name="Hosono S."/>
            <person name="Hullo M.-F."/>
            <person name="Itaya M."/>
            <person name="Jones L.-M."/>
            <person name="Joris B."/>
            <person name="Karamata D."/>
            <person name="Kasahara Y."/>
            <person name="Klaerr-Blanchard M."/>
            <person name="Klein C."/>
            <person name="Kobayashi Y."/>
            <person name="Koetter P."/>
            <person name="Koningstein G."/>
            <person name="Krogh S."/>
            <person name="Kumano M."/>
            <person name="Kurita K."/>
            <person name="Lapidus A."/>
            <person name="Lardinois S."/>
            <person name="Lauber J."/>
            <person name="Lazarevic V."/>
            <person name="Lee S.-M."/>
            <person name="Levine A."/>
            <person name="Liu H."/>
            <person name="Masuda S."/>
            <person name="Mauel C."/>
            <person name="Medigue C."/>
            <person name="Medina N."/>
            <person name="Mellado R.P."/>
            <person name="Mizuno M."/>
            <person name="Moestl D."/>
            <person name="Nakai S."/>
            <person name="Noback M."/>
            <person name="Noone D."/>
            <person name="O'Reilly M."/>
            <person name="Ogawa K."/>
            <person name="Ogiwara A."/>
            <person name="Oudega B."/>
            <person name="Park S.-H."/>
            <person name="Parro V."/>
            <person name="Pohl T.M."/>
            <person name="Portetelle D."/>
            <person name="Porwollik S."/>
            <person name="Prescott A.M."/>
            <person name="Presecan E."/>
            <person name="Pujic P."/>
            <person name="Purnelle B."/>
            <person name="Rapoport G."/>
            <person name="Rey M."/>
            <person name="Reynolds S."/>
            <person name="Rieger M."/>
            <person name="Rivolta C."/>
            <person name="Rocha E."/>
            <person name="Roche B."/>
            <person name="Rose M."/>
            <person name="Sadaie Y."/>
            <person name="Sato T."/>
            <person name="Scanlan E."/>
            <person name="Schleich S."/>
            <person name="Schroeter R."/>
            <person name="Scoffone F."/>
            <person name="Sekiguchi J."/>
            <person name="Sekowska A."/>
            <person name="Seror S.J."/>
            <person name="Serror P."/>
            <person name="Shin B.-S."/>
            <person name="Soldo B."/>
            <person name="Sorokin A."/>
            <person name="Tacconi E."/>
            <person name="Takagi T."/>
            <person name="Takahashi H."/>
            <person name="Takemaru K."/>
            <person name="Takeuchi M."/>
            <person name="Tamakoshi A."/>
            <person name="Tanaka T."/>
            <person name="Terpstra P."/>
            <person name="Tognoni A."/>
            <person name="Tosato V."/>
            <person name="Uchiyama S."/>
            <person name="Vandenbol M."/>
            <person name="Vannier F."/>
            <person name="Vassarotti A."/>
            <person name="Viari A."/>
            <person name="Wambutt R."/>
            <person name="Wedler E."/>
            <person name="Wedler H."/>
            <person name="Weitzenegger T."/>
            <person name="Winters P."/>
            <person name="Wipat A."/>
            <person name="Yamamoto H."/>
            <person name="Yamane K."/>
            <person name="Yasumoto K."/>
            <person name="Yata K."/>
            <person name="Yoshida K."/>
            <person name="Yoshikawa H.-F."/>
            <person name="Zumstein E."/>
            <person name="Yoshikawa H."/>
            <person name="Danchin A."/>
        </authorList>
    </citation>
    <scope>NUCLEOTIDE SEQUENCE [LARGE SCALE GENOMIC DNA]</scope>
    <source>
        <strain>168</strain>
    </source>
</reference>
<reference key="3">
    <citation type="journal article" date="2003" name="J. Biochem.">
        <title>Purification and characterization of yfkN, a trifunctional nucleotide phosphoesterase secreted by Bacillus subtilis.</title>
        <authorList>
            <person name="Chambert R."/>
            <person name="Pereira Y."/>
            <person name="Petit-Glatron M.-F."/>
        </authorList>
    </citation>
    <scope>PROTEIN SEQUENCE OF 36-43 AND 955-960</scope>
    <scope>FUNCTION AS A TRIFUNCTIONAL NUCLEOTIDE PHOSPHOESTERASE</scope>
    <scope>CATALYTIC ACTIVITY</scope>
    <scope>KINETIC PARAMETERS</scope>
    <scope>SUBSTRATE SPECIFICITY</scope>
    <scope>DOMAIN N-TERMINAL</scope>
    <scope>SUBCELLULAR LOCATION</scope>
    <source>
        <strain>168 / Marburg / ATCC 6051 / DSM 10 / JCM 1465 / NBRC 13719 / NCIMB 3610 / NRRL NRS-744 / VKM B-501</strain>
    </source>
</reference>
<reference key="4">
    <citation type="journal article" date="2005" name="J. Bacteriol.">
        <title>Genome-wide transcriptional analysis of the phosphate starvation stimulon of Bacillus subtilis.</title>
        <authorList>
            <person name="Allenby N.E.E."/>
            <person name="O'Connor N."/>
            <person name="Pragai Z."/>
            <person name="Ward A.C."/>
            <person name="Wipat A."/>
            <person name="Harwood C.R."/>
        </authorList>
    </citation>
    <scope>INDUCTION BY PHOSPHATE STARVATION</scope>
    <source>
        <strain>168</strain>
    </source>
</reference>
<reference key="5">
    <citation type="journal article" date="2011" name="AMB Express">
        <title>Analysis and application of Bacillus subtilis sortases to anchor recombinant proteins on the cell wall.</title>
        <authorList>
            <person name="Nguyen H.D."/>
            <person name="Phan T.T."/>
            <person name="Schumann W."/>
        </authorList>
    </citation>
    <scope>SUBCELLULAR LOCATION</scope>
    <scope>PROCESSING BY SORTASE D</scope>
</reference>
<reference key="6">
    <citation type="journal article" date="2011" name="Proteomics">
        <title>Functional analysis of the sortase YhcS in Bacillus subtilis.</title>
        <authorList>
            <person name="Fasehee H."/>
            <person name="Westers H."/>
            <person name="Bolhuis A."/>
            <person name="Antelmann H."/>
            <person name="Hecker M."/>
            <person name="Quax W.J."/>
            <person name="Mirlohi A.F."/>
            <person name="van Dijl J.M."/>
            <person name="Ahmadian G."/>
        </authorList>
    </citation>
    <scope>SUBCELLULAR LOCATION</scope>
    <scope>PROCESSING BY SORTASE D</scope>
</reference>
<reference key="7">
    <citation type="submission" date="2009-04" db="PDB data bank">
        <title>Crystal structure of calcineurin-like phosphoesterase from Bacillus subtilis.</title>
        <authorList>
            <consortium name="Midwest center for structural genomics (MCSG)"/>
        </authorList>
    </citation>
    <scope>X-RAY CRYSTALLOGRAPHY (1.25 ANGSTROMS) OF 37-374 IN COMPLEX WITH DIVALENT METAL CATIONS</scope>
</reference>
<dbReference type="EC" id="3.1.3.6"/>
<dbReference type="EC" id="3.1.4.16"/>
<dbReference type="EC" id="3.1.3.5"/>
<dbReference type="EMBL" id="D83967">
    <property type="protein sequence ID" value="BAA23404.1"/>
    <property type="molecule type" value="Genomic_DNA"/>
</dbReference>
<dbReference type="EMBL" id="AL009126">
    <property type="protein sequence ID" value="CAB12613.1"/>
    <property type="molecule type" value="Genomic_DNA"/>
</dbReference>
<dbReference type="PIR" id="A69809">
    <property type="entry name" value="A69809"/>
</dbReference>
<dbReference type="RefSeq" id="NP_388665.1">
    <property type="nucleotide sequence ID" value="NC_000964.3"/>
</dbReference>
<dbReference type="RefSeq" id="WP_010886443.1">
    <property type="nucleotide sequence ID" value="NZ_OZ025638.1"/>
</dbReference>
<dbReference type="PDB" id="3GVE">
    <property type="method" value="X-ray"/>
    <property type="resolution" value="1.25 A"/>
    <property type="chains" value="A/B=37-374"/>
</dbReference>
<dbReference type="PDBsum" id="3GVE"/>
<dbReference type="SMR" id="O34313"/>
<dbReference type="FunCoup" id="O34313">
    <property type="interactions" value="100"/>
</dbReference>
<dbReference type="IntAct" id="O34313">
    <property type="interactions" value="1"/>
</dbReference>
<dbReference type="STRING" id="224308.BSU07840"/>
<dbReference type="PaxDb" id="224308-BSU07840"/>
<dbReference type="DNASU" id="936131"/>
<dbReference type="EnsemblBacteria" id="CAB12613">
    <property type="protein sequence ID" value="CAB12613"/>
    <property type="gene ID" value="BSU_07840"/>
</dbReference>
<dbReference type="GeneID" id="936131"/>
<dbReference type="KEGG" id="bsu:BSU07840"/>
<dbReference type="PATRIC" id="fig|224308.43.peg.822"/>
<dbReference type="eggNOG" id="COG0737">
    <property type="taxonomic scope" value="Bacteria"/>
</dbReference>
<dbReference type="InParanoid" id="O34313"/>
<dbReference type="OrthoDB" id="9775118at2"/>
<dbReference type="BioCyc" id="BSUB:BSU07840-MONOMER"/>
<dbReference type="EvolutionaryTrace" id="O34313"/>
<dbReference type="Proteomes" id="UP000001570">
    <property type="component" value="Chromosome"/>
</dbReference>
<dbReference type="GO" id="GO:0005576">
    <property type="term" value="C:extracellular region"/>
    <property type="evidence" value="ECO:0007669"/>
    <property type="project" value="UniProtKB-KW"/>
</dbReference>
<dbReference type="GO" id="GO:0030288">
    <property type="term" value="C:outer membrane-bounded periplasmic space"/>
    <property type="evidence" value="ECO:0000318"/>
    <property type="project" value="GO_Central"/>
</dbReference>
<dbReference type="GO" id="GO:0008663">
    <property type="term" value="F:2',3'-cyclic-nucleotide 2'-phosphodiesterase activity"/>
    <property type="evidence" value="ECO:0007669"/>
    <property type="project" value="UniProtKB-EC"/>
</dbReference>
<dbReference type="GO" id="GO:0008254">
    <property type="term" value="F:3'-nucleotidase activity"/>
    <property type="evidence" value="ECO:0007669"/>
    <property type="project" value="UniProtKB-EC"/>
</dbReference>
<dbReference type="GO" id="GO:0008253">
    <property type="term" value="F:5'-nucleotidase activity"/>
    <property type="evidence" value="ECO:0007669"/>
    <property type="project" value="UniProtKB-EC"/>
</dbReference>
<dbReference type="GO" id="GO:0046872">
    <property type="term" value="F:metal ion binding"/>
    <property type="evidence" value="ECO:0007669"/>
    <property type="project" value="UniProtKB-KW"/>
</dbReference>
<dbReference type="GO" id="GO:0000166">
    <property type="term" value="F:nucleotide binding"/>
    <property type="evidence" value="ECO:0007669"/>
    <property type="project" value="UniProtKB-KW"/>
</dbReference>
<dbReference type="GO" id="GO:0009166">
    <property type="term" value="P:nucleotide catabolic process"/>
    <property type="evidence" value="ECO:0007669"/>
    <property type="project" value="InterPro"/>
</dbReference>
<dbReference type="CDD" id="cd07410">
    <property type="entry name" value="MPP_CpdB_N"/>
    <property type="match status" value="1"/>
</dbReference>
<dbReference type="FunFam" id="3.90.780.10:FF:000015">
    <property type="entry name" value="Trifunctional nucleotide phosphoesterase protein YfkN"/>
    <property type="match status" value="2"/>
</dbReference>
<dbReference type="Gene3D" id="3.60.21.10">
    <property type="match status" value="2"/>
</dbReference>
<dbReference type="Gene3D" id="3.90.780.10">
    <property type="entry name" value="5'-Nucleotidase, C-terminal domain"/>
    <property type="match status" value="2"/>
</dbReference>
<dbReference type="InterPro" id="IPR008334">
    <property type="entry name" value="5'-Nucleotdase_C"/>
</dbReference>
<dbReference type="InterPro" id="IPR036907">
    <property type="entry name" value="5'-Nucleotdase_C_sf"/>
</dbReference>
<dbReference type="InterPro" id="IPR006146">
    <property type="entry name" value="5'-Nucleotdase_CS"/>
</dbReference>
<dbReference type="InterPro" id="IPR006179">
    <property type="entry name" value="5_nucleotidase/apyrase"/>
</dbReference>
<dbReference type="InterPro" id="IPR004843">
    <property type="entry name" value="Calcineurin-like_PHP_ApaH"/>
</dbReference>
<dbReference type="InterPro" id="IPR041827">
    <property type="entry name" value="CpdB_N"/>
</dbReference>
<dbReference type="InterPro" id="IPR019931">
    <property type="entry name" value="LPXTG_anchor"/>
</dbReference>
<dbReference type="InterPro" id="IPR029052">
    <property type="entry name" value="Metallo-depent_PP-like"/>
</dbReference>
<dbReference type="NCBIfam" id="NF006937">
    <property type="entry name" value="PRK09419.1-4"/>
    <property type="match status" value="1"/>
</dbReference>
<dbReference type="NCBIfam" id="NF006938">
    <property type="entry name" value="PRK09420.1"/>
    <property type="match status" value="1"/>
</dbReference>
<dbReference type="PANTHER" id="PTHR11575:SF6">
    <property type="entry name" value="2',3'-CYCLIC-NUCLEOTIDE 2'-PHOSPHODIESTERASE_3'-NUCLEOTIDASE"/>
    <property type="match status" value="1"/>
</dbReference>
<dbReference type="PANTHER" id="PTHR11575">
    <property type="entry name" value="5'-NUCLEOTIDASE-RELATED"/>
    <property type="match status" value="1"/>
</dbReference>
<dbReference type="Pfam" id="PF02872">
    <property type="entry name" value="5_nucleotid_C"/>
    <property type="match status" value="2"/>
</dbReference>
<dbReference type="Pfam" id="PF00149">
    <property type="entry name" value="Metallophos"/>
    <property type="match status" value="2"/>
</dbReference>
<dbReference type="PRINTS" id="PR01607">
    <property type="entry name" value="APYRASEFAMLY"/>
</dbReference>
<dbReference type="SUPFAM" id="SSF55816">
    <property type="entry name" value="5'-nucleotidase (syn. UDP-sugar hydrolase), C-terminal domain"/>
    <property type="match status" value="2"/>
</dbReference>
<dbReference type="SUPFAM" id="SSF56300">
    <property type="entry name" value="Metallo-dependent phosphatases"/>
    <property type="match status" value="2"/>
</dbReference>
<dbReference type="PROSITE" id="PS00785">
    <property type="entry name" value="5_NUCLEOTIDASE_1"/>
    <property type="match status" value="2"/>
</dbReference>
<dbReference type="PROSITE" id="PS00786">
    <property type="entry name" value="5_NUCLEOTIDASE_2"/>
    <property type="match status" value="1"/>
</dbReference>
<dbReference type="PROSITE" id="PS50847">
    <property type="entry name" value="GRAM_POS_ANCHORING"/>
    <property type="match status" value="1"/>
</dbReference>
<keyword id="KW-0002">3D-structure</keyword>
<keyword id="KW-0134">Cell wall</keyword>
<keyword id="KW-0903">Direct protein sequencing</keyword>
<keyword id="KW-0378">Hydrolase</keyword>
<keyword id="KW-0479">Metal-binding</keyword>
<keyword id="KW-0511">Multifunctional enzyme</keyword>
<keyword id="KW-0547">Nucleotide-binding</keyword>
<keyword id="KW-0572">Peptidoglycan-anchor</keyword>
<keyword id="KW-1185">Reference proteome</keyword>
<keyword id="KW-0964">Secreted</keyword>
<keyword id="KW-0732">Signal</keyword>